<dbReference type="EMBL" id="BC088469">
    <property type="protein sequence ID" value="AAH88469.1"/>
    <property type="molecule type" value="mRNA"/>
</dbReference>
<dbReference type="RefSeq" id="NP_001009605.1">
    <property type="nucleotide sequence ID" value="NM_001009605.1"/>
</dbReference>
<dbReference type="RefSeq" id="XP_017445773.1">
    <property type="nucleotide sequence ID" value="XM_017590284.1"/>
</dbReference>
<dbReference type="RefSeq" id="XP_063142905.1">
    <property type="nucleotide sequence ID" value="XM_063286835.1"/>
</dbReference>
<dbReference type="SMR" id="Q5M7T3"/>
<dbReference type="FunCoup" id="Q5M7T3">
    <property type="interactions" value="1696"/>
</dbReference>
<dbReference type="STRING" id="10116.ENSRNOP00000027258"/>
<dbReference type="PhosphoSitePlus" id="Q5M7T3"/>
<dbReference type="PaxDb" id="10116-ENSRNOP00000027258"/>
<dbReference type="GeneID" id="293668"/>
<dbReference type="KEGG" id="rno:293668"/>
<dbReference type="UCSC" id="RGD:1311057">
    <property type="organism name" value="rat"/>
</dbReference>
<dbReference type="AGR" id="RGD:1311057"/>
<dbReference type="CTD" id="25855"/>
<dbReference type="RGD" id="1311057">
    <property type="gene designation" value="Brms1"/>
</dbReference>
<dbReference type="VEuPathDB" id="HostDB:ENSRNOG00000020117"/>
<dbReference type="eggNOG" id="KOG4466">
    <property type="taxonomic scope" value="Eukaryota"/>
</dbReference>
<dbReference type="HOGENOM" id="CLU_050862_1_0_1"/>
<dbReference type="InParanoid" id="Q5M7T3"/>
<dbReference type="OrthoDB" id="75668at9989"/>
<dbReference type="PhylomeDB" id="Q5M7T3"/>
<dbReference type="TreeFam" id="TF323740"/>
<dbReference type="Reactome" id="R-RNO-3214815">
    <property type="pathway name" value="HDACs deacetylate histones"/>
</dbReference>
<dbReference type="PRO" id="PR:Q5M7T3"/>
<dbReference type="Proteomes" id="UP000002494">
    <property type="component" value="Chromosome 1"/>
</dbReference>
<dbReference type="Bgee" id="ENSRNOG00000020117">
    <property type="expression patterns" value="Expressed in testis and 19 other cell types or tissues"/>
</dbReference>
<dbReference type="GO" id="GO:0005737">
    <property type="term" value="C:cytoplasm"/>
    <property type="evidence" value="ECO:0000266"/>
    <property type="project" value="RGD"/>
</dbReference>
<dbReference type="GO" id="GO:0005634">
    <property type="term" value="C:nucleus"/>
    <property type="evidence" value="ECO:0000250"/>
    <property type="project" value="UniProtKB"/>
</dbReference>
<dbReference type="GO" id="GO:0070822">
    <property type="term" value="C:Sin3-type complex"/>
    <property type="evidence" value="ECO:0000318"/>
    <property type="project" value="GO_Central"/>
</dbReference>
<dbReference type="GO" id="GO:0042826">
    <property type="term" value="F:histone deacetylase binding"/>
    <property type="evidence" value="ECO:0000318"/>
    <property type="project" value="GO_Central"/>
</dbReference>
<dbReference type="GO" id="GO:0051059">
    <property type="term" value="F:NF-kappaB binding"/>
    <property type="evidence" value="ECO:0000266"/>
    <property type="project" value="RGD"/>
</dbReference>
<dbReference type="GO" id="GO:0006915">
    <property type="term" value="P:apoptotic process"/>
    <property type="evidence" value="ECO:0007669"/>
    <property type="project" value="UniProtKB-KW"/>
</dbReference>
<dbReference type="GO" id="GO:0045892">
    <property type="term" value="P:negative regulation of DNA-templated transcription"/>
    <property type="evidence" value="ECO:0000250"/>
    <property type="project" value="UniProtKB"/>
</dbReference>
<dbReference type="GO" id="GO:0032088">
    <property type="term" value="P:negative regulation of NF-kappaB transcription factor activity"/>
    <property type="evidence" value="ECO:0000250"/>
    <property type="project" value="UniProtKB"/>
</dbReference>
<dbReference type="GO" id="GO:0000122">
    <property type="term" value="P:negative regulation of transcription by RNA polymerase II"/>
    <property type="evidence" value="ECO:0000318"/>
    <property type="project" value="GO_Central"/>
</dbReference>
<dbReference type="GO" id="GO:2000210">
    <property type="term" value="P:positive regulation of anoikis"/>
    <property type="evidence" value="ECO:0000250"/>
    <property type="project" value="UniProtKB"/>
</dbReference>
<dbReference type="GO" id="GO:0090312">
    <property type="term" value="P:positive regulation of protein deacetylation"/>
    <property type="evidence" value="ECO:0000250"/>
    <property type="project" value="UniProtKB"/>
</dbReference>
<dbReference type="GO" id="GO:0042981">
    <property type="term" value="P:regulation of apoptotic process"/>
    <property type="evidence" value="ECO:0000250"/>
    <property type="project" value="UniProtKB"/>
</dbReference>
<dbReference type="FunFam" id="1.20.5.1500:FF:000002">
    <property type="entry name" value="breast cancer metastasis-suppressor 1-like protein-A"/>
    <property type="match status" value="1"/>
</dbReference>
<dbReference type="Gene3D" id="1.20.5.1500">
    <property type="match status" value="1"/>
</dbReference>
<dbReference type="InterPro" id="IPR013907">
    <property type="entry name" value="Sds3"/>
</dbReference>
<dbReference type="PANTHER" id="PTHR21964">
    <property type="entry name" value="BREAST CANCER METASTASIS-SUPPRESSOR 1"/>
    <property type="match status" value="1"/>
</dbReference>
<dbReference type="Pfam" id="PF08598">
    <property type="entry name" value="Sds3"/>
    <property type="match status" value="1"/>
</dbReference>
<dbReference type="SMART" id="SM01401">
    <property type="entry name" value="Sds3"/>
    <property type="match status" value="1"/>
</dbReference>
<accession>Q5M7T3</accession>
<gene>
    <name type="primary">Brms1</name>
</gene>
<keyword id="KW-0053">Apoptosis</keyword>
<keyword id="KW-0175">Coiled coil</keyword>
<keyword id="KW-0963">Cytoplasm</keyword>
<keyword id="KW-1017">Isopeptide bond</keyword>
<keyword id="KW-0539">Nucleus</keyword>
<keyword id="KW-1185">Reference proteome</keyword>
<keyword id="KW-0678">Repressor</keyword>
<keyword id="KW-0804">Transcription</keyword>
<keyword id="KW-0805">Transcription regulation</keyword>
<keyword id="KW-0043">Tumor suppressor</keyword>
<keyword id="KW-0832">Ubl conjugation</keyword>
<evidence type="ECO:0000250" key="1"/>
<evidence type="ECO:0000250" key="2">
    <source>
        <dbReference type="UniProtKB" id="Q5PSV4"/>
    </source>
</evidence>
<evidence type="ECO:0000250" key="3">
    <source>
        <dbReference type="UniProtKB" id="Q9HCU9"/>
    </source>
</evidence>
<evidence type="ECO:0000256" key="4">
    <source>
        <dbReference type="SAM" id="MobiDB-lite"/>
    </source>
</evidence>
<evidence type="ECO:0000305" key="5"/>
<reference key="1">
    <citation type="journal article" date="2004" name="Genome Res.">
        <title>The status, quality, and expansion of the NIH full-length cDNA project: the Mammalian Gene Collection (MGC).</title>
        <authorList>
            <consortium name="The MGC Project Team"/>
        </authorList>
    </citation>
    <scope>NUCLEOTIDE SEQUENCE [LARGE SCALE MRNA]</scope>
    <source>
        <tissue>Kidney</tissue>
    </source>
</reference>
<proteinExistence type="evidence at transcript level"/>
<comment type="function">
    <text evidence="1">Transcriptional repressor. Down-regulates transcription activation by NF-kappa-B by promoting the deacetylation of RELA at 'Lys-310'. Promotes HDAC1 binding to promoter regions. Down-regulates expression of anti-apoptotic genes that are controlled by NF-kappa-B. Promotes apoptosis in cells that have inadequate adherence to a substrate, a process called anoikis, and may thereby inhibit metastasis (By similarity).</text>
</comment>
<comment type="subunit">
    <text evidence="1 5">Homohexamer (Potential). Interacts with SNX6, HDAC1 and RELA. Interacts with ARID4A. Identified in mSin3A corepressor complexes together with SIN3A, SIN3B, RBBP4, RBBP7, SAP30, SUDS3, ARID4A, HDAC1 and HDAC2. Interacts with SPOP; this recruits the protein to a ubiquitin ligase complex containing SPOP and CUL3 (By similarity).</text>
</comment>
<comment type="subcellular location">
    <subcellularLocation>
        <location evidence="1">Nucleus</location>
    </subcellularLocation>
    <subcellularLocation>
        <location evidence="1">Cytoplasm</location>
    </subcellularLocation>
    <text evidence="1">Predominantly nuclear.</text>
</comment>
<comment type="domain">
    <text evidence="1">Contains an N-terminal anti-parallel coiled coil formed by two BRMS1 chains; this region can form homohexamers.</text>
</comment>
<comment type="PTM">
    <text evidence="1">Ubiquitinated by a cullin-RING-based BCR (BTB-CUL3-RBX1) E3 ubiquitin-protein ligase complex containing SPOP, leading to proteasomal degradation.</text>
</comment>
<comment type="similarity">
    <text evidence="5">Belongs to the BRMS1 family.</text>
</comment>
<feature type="chain" id="PRO_0000305307" description="Breast cancer metastasis-suppressor 1 homolog">
    <location>
        <begin position="1"/>
        <end position="246"/>
    </location>
</feature>
<feature type="region of interest" description="Disordered" evidence="4">
    <location>
        <begin position="1"/>
        <end position="57"/>
    </location>
</feature>
<feature type="coiled-coil region" evidence="1">
    <location>
        <begin position="51"/>
        <end position="98"/>
    </location>
</feature>
<feature type="compositionally biased region" description="Acidic residues" evidence="4">
    <location>
        <begin position="11"/>
        <end position="32"/>
    </location>
</feature>
<feature type="compositionally biased region" description="Acidic residues" evidence="4">
    <location>
        <begin position="40"/>
        <end position="52"/>
    </location>
</feature>
<feature type="cross-link" description="Glycyl lysine isopeptide (Lys-Gly) (interchain with G-Cter in SUMO2)" evidence="3">
    <location>
        <position position="184"/>
    </location>
</feature>
<feature type="cross-link" description="Glycyl lysine isopeptide (Lys-Gly) (interchain with G-Cter in SUMO2)" evidence="2">
    <location>
        <position position="242"/>
    </location>
</feature>
<sequence length="246" mass="28306">MPIQPSGKETEEMEAEGDSAAEMNGEADESEEERSGSQTESEEESSEMDDEDYERRRSECVSEMLDLEKQFSELKEKLFRERLSQLRLRLEEVGAERAPEYTEPLGGLQQSLKIRIQVAGIYKGFCLDVIRNKYECELQGAKQHLESEKLLLYDTLLGELQERIQRLEEDRQSLDISSEWWDDKLHSRGSSKTWDSVPPSKRKKAPLVSGPYIVYMLQEIDILEDWTAIKKARAAVSPQKRKADGP</sequence>
<organism>
    <name type="scientific">Rattus norvegicus</name>
    <name type="common">Rat</name>
    <dbReference type="NCBI Taxonomy" id="10116"/>
    <lineage>
        <taxon>Eukaryota</taxon>
        <taxon>Metazoa</taxon>
        <taxon>Chordata</taxon>
        <taxon>Craniata</taxon>
        <taxon>Vertebrata</taxon>
        <taxon>Euteleostomi</taxon>
        <taxon>Mammalia</taxon>
        <taxon>Eutheria</taxon>
        <taxon>Euarchontoglires</taxon>
        <taxon>Glires</taxon>
        <taxon>Rodentia</taxon>
        <taxon>Myomorpha</taxon>
        <taxon>Muroidea</taxon>
        <taxon>Muridae</taxon>
        <taxon>Murinae</taxon>
        <taxon>Rattus</taxon>
    </lineage>
</organism>
<name>BRMS1_RAT</name>
<protein>
    <recommendedName>
        <fullName>Breast cancer metastasis-suppressor 1 homolog</fullName>
    </recommendedName>
</protein>